<protein>
    <recommendedName>
        <fullName evidence="1">Disulfide bond formation protein B</fullName>
    </recommendedName>
    <alternativeName>
        <fullName evidence="1">Disulfide oxidoreductase</fullName>
    </alternativeName>
</protein>
<evidence type="ECO:0000255" key="1">
    <source>
        <dbReference type="HAMAP-Rule" id="MF_00286"/>
    </source>
</evidence>
<reference key="1">
    <citation type="journal article" date="2006" name="Mol. Microbiol.">
        <title>Role of pathogenicity island-associated integrases in the genome plasticity of uropathogenic Escherichia coli strain 536.</title>
        <authorList>
            <person name="Hochhut B."/>
            <person name="Wilde C."/>
            <person name="Balling G."/>
            <person name="Middendorf B."/>
            <person name="Dobrindt U."/>
            <person name="Brzuszkiewicz E."/>
            <person name="Gottschalk G."/>
            <person name="Carniel E."/>
            <person name="Hacker J."/>
        </authorList>
    </citation>
    <scope>NUCLEOTIDE SEQUENCE [LARGE SCALE GENOMIC DNA]</scope>
    <source>
        <strain>536 / UPEC</strain>
    </source>
</reference>
<proteinExistence type="inferred from homology"/>
<comment type="function">
    <text evidence="1">Required for disulfide bond formation in some periplasmic proteins. Acts by oxidizing the DsbA protein.</text>
</comment>
<comment type="subcellular location">
    <subcellularLocation>
        <location evidence="1">Cell inner membrane</location>
        <topology evidence="1">Multi-pass membrane protein</topology>
    </subcellularLocation>
</comment>
<comment type="similarity">
    <text evidence="1">Belongs to the DsbB family.</text>
</comment>
<sequence>MLRFLNQCSHGRGAWLLMAFTALALELTALWFQHVMLLKPCVLCIYERCALFGVLGAALIGAIAPKTPLRYVAMVIWLYSAFRGVQLTYEHTMLQLYPSPFATCDFMARFPEWLPLDKWVPQVFVASGDCAERQWEFLGLEMPQWLLGIFIAYLIVAVLVVISQPFKAKKRDLFGR</sequence>
<accession>Q0TIJ0</accession>
<gene>
    <name evidence="1" type="primary">dsbB</name>
    <name type="ordered locus">ECP_1228</name>
</gene>
<keyword id="KW-0997">Cell inner membrane</keyword>
<keyword id="KW-1003">Cell membrane</keyword>
<keyword id="KW-0143">Chaperone</keyword>
<keyword id="KW-1015">Disulfide bond</keyword>
<keyword id="KW-0249">Electron transport</keyword>
<keyword id="KW-0472">Membrane</keyword>
<keyword id="KW-0560">Oxidoreductase</keyword>
<keyword id="KW-0676">Redox-active center</keyword>
<keyword id="KW-0812">Transmembrane</keyword>
<keyword id="KW-1133">Transmembrane helix</keyword>
<keyword id="KW-0813">Transport</keyword>
<name>DSBB_ECOL5</name>
<dbReference type="EMBL" id="CP000247">
    <property type="protein sequence ID" value="ABG69239.1"/>
    <property type="molecule type" value="Genomic_DNA"/>
</dbReference>
<dbReference type="RefSeq" id="WP_000943441.1">
    <property type="nucleotide sequence ID" value="NC_008253.1"/>
</dbReference>
<dbReference type="SMR" id="Q0TIJ0"/>
<dbReference type="KEGG" id="ecp:ECP_1228"/>
<dbReference type="HOGENOM" id="CLU_098660_2_0_6"/>
<dbReference type="Proteomes" id="UP000009182">
    <property type="component" value="Chromosome"/>
</dbReference>
<dbReference type="GO" id="GO:0005886">
    <property type="term" value="C:plasma membrane"/>
    <property type="evidence" value="ECO:0007669"/>
    <property type="project" value="UniProtKB-SubCell"/>
</dbReference>
<dbReference type="GO" id="GO:0009055">
    <property type="term" value="F:electron transfer activity"/>
    <property type="evidence" value="ECO:0007669"/>
    <property type="project" value="UniProtKB-UniRule"/>
</dbReference>
<dbReference type="GO" id="GO:0015035">
    <property type="term" value="F:protein-disulfide reductase activity"/>
    <property type="evidence" value="ECO:0007669"/>
    <property type="project" value="UniProtKB-UniRule"/>
</dbReference>
<dbReference type="GO" id="GO:0006457">
    <property type="term" value="P:protein folding"/>
    <property type="evidence" value="ECO:0007669"/>
    <property type="project" value="InterPro"/>
</dbReference>
<dbReference type="FunFam" id="1.20.1550.10:FF:000001">
    <property type="entry name" value="Disulfide bond formation protein B"/>
    <property type="match status" value="1"/>
</dbReference>
<dbReference type="Gene3D" id="1.20.1550.10">
    <property type="entry name" value="DsbB-like"/>
    <property type="match status" value="1"/>
</dbReference>
<dbReference type="HAMAP" id="MF_00286">
    <property type="entry name" value="DsbB"/>
    <property type="match status" value="1"/>
</dbReference>
<dbReference type="InterPro" id="IPR003752">
    <property type="entry name" value="DiS_bond_form_DsbB/BdbC"/>
</dbReference>
<dbReference type="InterPro" id="IPR022920">
    <property type="entry name" value="Disulphide_bond_form_DsbB"/>
</dbReference>
<dbReference type="InterPro" id="IPR050183">
    <property type="entry name" value="DsbB"/>
</dbReference>
<dbReference type="InterPro" id="IPR023380">
    <property type="entry name" value="DsbB-like_sf"/>
</dbReference>
<dbReference type="NCBIfam" id="NF002485">
    <property type="entry name" value="PRK01749.1"/>
    <property type="match status" value="1"/>
</dbReference>
<dbReference type="PANTHER" id="PTHR36570">
    <property type="entry name" value="DISULFIDE BOND FORMATION PROTEIN B"/>
    <property type="match status" value="1"/>
</dbReference>
<dbReference type="PANTHER" id="PTHR36570:SF2">
    <property type="entry name" value="DISULFIDE BOND FORMATION PROTEIN B"/>
    <property type="match status" value="1"/>
</dbReference>
<dbReference type="Pfam" id="PF02600">
    <property type="entry name" value="DsbB"/>
    <property type="match status" value="1"/>
</dbReference>
<dbReference type="SUPFAM" id="SSF158442">
    <property type="entry name" value="DsbB-like"/>
    <property type="match status" value="1"/>
</dbReference>
<organism>
    <name type="scientific">Escherichia coli O6:K15:H31 (strain 536 / UPEC)</name>
    <dbReference type="NCBI Taxonomy" id="362663"/>
    <lineage>
        <taxon>Bacteria</taxon>
        <taxon>Pseudomonadati</taxon>
        <taxon>Pseudomonadota</taxon>
        <taxon>Gammaproteobacteria</taxon>
        <taxon>Enterobacterales</taxon>
        <taxon>Enterobacteriaceae</taxon>
        <taxon>Escherichia</taxon>
    </lineage>
</organism>
<feature type="chain" id="PRO_0000298359" description="Disulfide bond formation protein B">
    <location>
        <begin position="1"/>
        <end position="176"/>
    </location>
</feature>
<feature type="topological domain" description="Cytoplasmic" evidence="1">
    <location>
        <begin position="1"/>
        <end position="14"/>
    </location>
</feature>
<feature type="transmembrane region" description="Helical" evidence="1">
    <location>
        <begin position="15"/>
        <end position="31"/>
    </location>
</feature>
<feature type="topological domain" description="Periplasmic" evidence="1">
    <location>
        <begin position="32"/>
        <end position="49"/>
    </location>
</feature>
<feature type="transmembrane region" description="Helical" evidence="1">
    <location>
        <begin position="50"/>
        <end position="65"/>
    </location>
</feature>
<feature type="topological domain" description="Cytoplasmic" evidence="1">
    <location>
        <begin position="66"/>
        <end position="71"/>
    </location>
</feature>
<feature type="transmembrane region" description="Helical" evidence="1">
    <location>
        <begin position="72"/>
        <end position="89"/>
    </location>
</feature>
<feature type="topological domain" description="Periplasmic" evidence="1">
    <location>
        <begin position="90"/>
        <end position="144"/>
    </location>
</feature>
<feature type="transmembrane region" description="Helical" evidence="1">
    <location>
        <begin position="145"/>
        <end position="163"/>
    </location>
</feature>
<feature type="topological domain" description="Cytoplasmic" evidence="1">
    <location>
        <begin position="164"/>
        <end position="176"/>
    </location>
</feature>
<feature type="disulfide bond" description="Redox-active" evidence="1">
    <location>
        <begin position="41"/>
        <end position="44"/>
    </location>
</feature>
<feature type="disulfide bond" description="Redox-active" evidence="1">
    <location>
        <begin position="104"/>
        <end position="130"/>
    </location>
</feature>